<organism>
    <name type="scientific">Actinobacillus pleuropneumoniae serotype 7 (strain AP76)</name>
    <dbReference type="NCBI Taxonomy" id="537457"/>
    <lineage>
        <taxon>Bacteria</taxon>
        <taxon>Pseudomonadati</taxon>
        <taxon>Pseudomonadota</taxon>
        <taxon>Gammaproteobacteria</taxon>
        <taxon>Pasteurellales</taxon>
        <taxon>Pasteurellaceae</taxon>
        <taxon>Actinobacillus</taxon>
    </lineage>
</organism>
<proteinExistence type="inferred from homology"/>
<keyword id="KW-0031">Aminopeptidase</keyword>
<keyword id="KW-0963">Cytoplasm</keyword>
<keyword id="KW-0378">Hydrolase</keyword>
<keyword id="KW-0464">Manganese</keyword>
<keyword id="KW-0479">Metal-binding</keyword>
<keyword id="KW-0645">Protease</keyword>
<gene>
    <name evidence="1" type="primary">pepA</name>
    <name type="ordered locus">APP7_1157</name>
</gene>
<evidence type="ECO:0000255" key="1">
    <source>
        <dbReference type="HAMAP-Rule" id="MF_00181"/>
    </source>
</evidence>
<feature type="chain" id="PRO_1000098301" description="Probable cytosol aminopeptidase">
    <location>
        <begin position="1"/>
        <end position="499"/>
    </location>
</feature>
<feature type="active site" evidence="1">
    <location>
        <position position="281"/>
    </location>
</feature>
<feature type="active site" evidence="1">
    <location>
        <position position="355"/>
    </location>
</feature>
<feature type="binding site" evidence="1">
    <location>
        <position position="269"/>
    </location>
    <ligand>
        <name>Mn(2+)</name>
        <dbReference type="ChEBI" id="CHEBI:29035"/>
        <label>2</label>
    </ligand>
</feature>
<feature type="binding site" evidence="1">
    <location>
        <position position="274"/>
    </location>
    <ligand>
        <name>Mn(2+)</name>
        <dbReference type="ChEBI" id="CHEBI:29035"/>
        <label>1</label>
    </ligand>
</feature>
<feature type="binding site" evidence="1">
    <location>
        <position position="274"/>
    </location>
    <ligand>
        <name>Mn(2+)</name>
        <dbReference type="ChEBI" id="CHEBI:29035"/>
        <label>2</label>
    </ligand>
</feature>
<feature type="binding site" evidence="1">
    <location>
        <position position="292"/>
    </location>
    <ligand>
        <name>Mn(2+)</name>
        <dbReference type="ChEBI" id="CHEBI:29035"/>
        <label>2</label>
    </ligand>
</feature>
<feature type="binding site" evidence="1">
    <location>
        <position position="351"/>
    </location>
    <ligand>
        <name>Mn(2+)</name>
        <dbReference type="ChEBI" id="CHEBI:29035"/>
        <label>1</label>
    </ligand>
</feature>
<feature type="binding site" evidence="1">
    <location>
        <position position="353"/>
    </location>
    <ligand>
        <name>Mn(2+)</name>
        <dbReference type="ChEBI" id="CHEBI:29035"/>
        <label>1</label>
    </ligand>
</feature>
<feature type="binding site" evidence="1">
    <location>
        <position position="353"/>
    </location>
    <ligand>
        <name>Mn(2+)</name>
        <dbReference type="ChEBI" id="CHEBI:29035"/>
        <label>2</label>
    </ligand>
</feature>
<sequence>MEFSVKNGSVEKQRTACLVVGVYEPRRLSAAAEQLDKLSEGYISTLLRRGDLEGKAGQTLLLHNVPNVPADRVLLVGCGKERELTERQYKQIIQKMVQAVSETGSMEVVCFLTELHVKGRTSYWNVRFAIEAIQESLYSYNDFKSIKPEVRREFRRVIFNVANRKDLADAERALEHGKAISTGVAFAKNVANCPPNVCNPAYLAELAKGLAAEYDNIRTTVIDEAEMAALGMNAYLAVSRGSQNPAYLSVIEYKNHPNPDAKPIVLVGKGLTFDSGGISIKPSDSMDEMKYDMGGAASVYGTMKALAEMKLPLNVIGVLAGCENMPDGNAYRPGDILTTMNGLTVEVLNTDAEGRLVLCDTLTYVERFEPELVIDMATLTGACMIALGAHNSGLMSTSNVLANDLLNAAEQADDKAWRLPLGEEYQEQLKSNFADLANIGGRLGGAITAGQLLSNFTKKYVWAHLDIAGTAWKSGVAKGATGRPVSLLSQFLINKANNQ</sequence>
<protein>
    <recommendedName>
        <fullName evidence="1">Probable cytosol aminopeptidase</fullName>
        <ecNumber evidence="1">3.4.11.1</ecNumber>
    </recommendedName>
    <alternativeName>
        <fullName evidence="1">Leucine aminopeptidase</fullName>
        <shortName evidence="1">LAP</shortName>
        <ecNumber evidence="1">3.4.11.10</ecNumber>
    </alternativeName>
    <alternativeName>
        <fullName evidence="1">Leucyl aminopeptidase</fullName>
    </alternativeName>
</protein>
<name>AMPA_ACTP7</name>
<reference key="1">
    <citation type="submission" date="2008-06" db="EMBL/GenBank/DDBJ databases">
        <title>Genome and proteome analysis of A. pleuropneumoniae serotype 7.</title>
        <authorList>
            <person name="Linke B."/>
            <person name="Buettner F."/>
            <person name="Martinez-Arias R."/>
            <person name="Goesmann A."/>
            <person name="Baltes N."/>
            <person name="Tegetmeyer H."/>
            <person name="Singh M."/>
            <person name="Gerlach G.F."/>
        </authorList>
    </citation>
    <scope>NUCLEOTIDE SEQUENCE [LARGE SCALE GENOMIC DNA]</scope>
    <source>
        <strain>AP76</strain>
    </source>
</reference>
<dbReference type="EC" id="3.4.11.1" evidence="1"/>
<dbReference type="EC" id="3.4.11.10" evidence="1"/>
<dbReference type="EMBL" id="CP001091">
    <property type="protein sequence ID" value="ACE61809.1"/>
    <property type="molecule type" value="Genomic_DNA"/>
</dbReference>
<dbReference type="RefSeq" id="WP_005597974.1">
    <property type="nucleotide sequence ID" value="NC_010939.1"/>
</dbReference>
<dbReference type="SMR" id="B3GXY6"/>
<dbReference type="MEROPS" id="M17.003"/>
<dbReference type="GeneID" id="48599333"/>
<dbReference type="KEGG" id="apa:APP7_1157"/>
<dbReference type="HOGENOM" id="CLU_013734_2_2_6"/>
<dbReference type="Proteomes" id="UP000001226">
    <property type="component" value="Chromosome"/>
</dbReference>
<dbReference type="GO" id="GO:0005737">
    <property type="term" value="C:cytoplasm"/>
    <property type="evidence" value="ECO:0007669"/>
    <property type="project" value="UniProtKB-SubCell"/>
</dbReference>
<dbReference type="GO" id="GO:0030145">
    <property type="term" value="F:manganese ion binding"/>
    <property type="evidence" value="ECO:0007669"/>
    <property type="project" value="UniProtKB-UniRule"/>
</dbReference>
<dbReference type="GO" id="GO:0070006">
    <property type="term" value="F:metalloaminopeptidase activity"/>
    <property type="evidence" value="ECO:0007669"/>
    <property type="project" value="InterPro"/>
</dbReference>
<dbReference type="GO" id="GO:0006508">
    <property type="term" value="P:proteolysis"/>
    <property type="evidence" value="ECO:0007669"/>
    <property type="project" value="UniProtKB-KW"/>
</dbReference>
<dbReference type="CDD" id="cd00433">
    <property type="entry name" value="Peptidase_M17"/>
    <property type="match status" value="1"/>
</dbReference>
<dbReference type="FunFam" id="3.40.220.10:FF:000001">
    <property type="entry name" value="Probable cytosol aminopeptidase"/>
    <property type="match status" value="1"/>
</dbReference>
<dbReference type="FunFam" id="3.40.630.10:FF:000004">
    <property type="entry name" value="Probable cytosol aminopeptidase"/>
    <property type="match status" value="1"/>
</dbReference>
<dbReference type="Gene3D" id="3.40.220.10">
    <property type="entry name" value="Leucine Aminopeptidase, subunit E, domain 1"/>
    <property type="match status" value="1"/>
</dbReference>
<dbReference type="Gene3D" id="3.40.630.10">
    <property type="entry name" value="Zn peptidases"/>
    <property type="match status" value="1"/>
</dbReference>
<dbReference type="HAMAP" id="MF_00181">
    <property type="entry name" value="Cytosol_peptidase_M17"/>
    <property type="match status" value="1"/>
</dbReference>
<dbReference type="InterPro" id="IPR011356">
    <property type="entry name" value="Leucine_aapep/pepB"/>
</dbReference>
<dbReference type="InterPro" id="IPR043472">
    <property type="entry name" value="Macro_dom-like"/>
</dbReference>
<dbReference type="InterPro" id="IPR000819">
    <property type="entry name" value="Peptidase_M17_C"/>
</dbReference>
<dbReference type="InterPro" id="IPR023042">
    <property type="entry name" value="Peptidase_M17_leu_NH2_pept"/>
</dbReference>
<dbReference type="InterPro" id="IPR008283">
    <property type="entry name" value="Peptidase_M17_N"/>
</dbReference>
<dbReference type="NCBIfam" id="NF002072">
    <property type="entry name" value="PRK00913.1-1"/>
    <property type="match status" value="1"/>
</dbReference>
<dbReference type="NCBIfam" id="NF002073">
    <property type="entry name" value="PRK00913.1-2"/>
    <property type="match status" value="1"/>
</dbReference>
<dbReference type="NCBIfam" id="NF002074">
    <property type="entry name" value="PRK00913.1-4"/>
    <property type="match status" value="1"/>
</dbReference>
<dbReference type="PANTHER" id="PTHR11963:SF23">
    <property type="entry name" value="CYTOSOL AMINOPEPTIDASE"/>
    <property type="match status" value="1"/>
</dbReference>
<dbReference type="PANTHER" id="PTHR11963">
    <property type="entry name" value="LEUCINE AMINOPEPTIDASE-RELATED"/>
    <property type="match status" value="1"/>
</dbReference>
<dbReference type="Pfam" id="PF00883">
    <property type="entry name" value="Peptidase_M17"/>
    <property type="match status" value="1"/>
</dbReference>
<dbReference type="Pfam" id="PF02789">
    <property type="entry name" value="Peptidase_M17_N"/>
    <property type="match status" value="1"/>
</dbReference>
<dbReference type="PRINTS" id="PR00481">
    <property type="entry name" value="LAMNOPPTDASE"/>
</dbReference>
<dbReference type="SUPFAM" id="SSF52949">
    <property type="entry name" value="Macro domain-like"/>
    <property type="match status" value="1"/>
</dbReference>
<dbReference type="SUPFAM" id="SSF53187">
    <property type="entry name" value="Zn-dependent exopeptidases"/>
    <property type="match status" value="1"/>
</dbReference>
<dbReference type="PROSITE" id="PS00631">
    <property type="entry name" value="CYTOSOL_AP"/>
    <property type="match status" value="1"/>
</dbReference>
<accession>B3GXY6</accession>
<comment type="function">
    <text evidence="1">Presumably involved in the processing and regular turnover of intracellular proteins. Catalyzes the removal of unsubstituted N-terminal amino acids from various peptides.</text>
</comment>
<comment type="catalytic activity">
    <reaction evidence="1">
        <text>Release of an N-terminal amino acid, Xaa-|-Yaa-, in which Xaa is preferably Leu, but may be other amino acids including Pro although not Arg or Lys, and Yaa may be Pro. Amino acid amides and methyl esters are also readily hydrolyzed, but rates on arylamides are exceedingly low.</text>
        <dbReference type="EC" id="3.4.11.1"/>
    </reaction>
</comment>
<comment type="catalytic activity">
    <reaction evidence="1">
        <text>Release of an N-terminal amino acid, preferentially leucine, but not glutamic or aspartic acids.</text>
        <dbReference type="EC" id="3.4.11.10"/>
    </reaction>
</comment>
<comment type="cofactor">
    <cofactor evidence="1">
        <name>Mn(2+)</name>
        <dbReference type="ChEBI" id="CHEBI:29035"/>
    </cofactor>
    <text evidence="1">Binds 2 manganese ions per subunit.</text>
</comment>
<comment type="subcellular location">
    <subcellularLocation>
        <location evidence="1">Cytoplasm</location>
    </subcellularLocation>
</comment>
<comment type="similarity">
    <text evidence="1">Belongs to the peptidase M17 family.</text>
</comment>